<protein>
    <recommendedName>
        <fullName evidence="3">Nucleoside diphosphate kinase</fullName>
        <shortName evidence="3">NDK</shortName>
        <shortName evidence="3">NDP kinase</shortName>
        <ecNumber evidence="3">2.7.4.6</ecNumber>
    </recommendedName>
    <alternativeName>
        <fullName evidence="3">Nucleoside-2-P kinase</fullName>
    </alternativeName>
</protein>
<accession>Q0I6J3</accession>
<reference key="1">
    <citation type="journal article" date="2006" name="Proc. Natl. Acad. Sci. U.S.A.">
        <title>Genome sequence of Synechococcus CC9311: insights into adaptation to a coastal environment.</title>
        <authorList>
            <person name="Palenik B."/>
            <person name="Ren Q."/>
            <person name="Dupont C.L."/>
            <person name="Myers G.S."/>
            <person name="Heidelberg J.F."/>
            <person name="Badger J.H."/>
            <person name="Madupu R."/>
            <person name="Nelson W.C."/>
            <person name="Brinkac L.M."/>
            <person name="Dodson R.J."/>
            <person name="Durkin A.S."/>
            <person name="Daugherty S.C."/>
            <person name="Sullivan S.A."/>
            <person name="Khouri H."/>
            <person name="Mohamoud Y."/>
            <person name="Halpin R."/>
            <person name="Paulsen I.T."/>
        </authorList>
    </citation>
    <scope>NUCLEOTIDE SEQUENCE [LARGE SCALE GENOMIC DNA]</scope>
    <source>
        <strain>CC9311</strain>
    </source>
</reference>
<feature type="chain" id="PRO_0000267807" description="Nucleoside diphosphate kinase">
    <location>
        <begin position="1"/>
        <end position="152"/>
    </location>
</feature>
<feature type="active site" description="Pros-phosphohistidine intermediate" evidence="3">
    <location>
        <position position="117"/>
    </location>
</feature>
<feature type="binding site" evidence="3">
    <location>
        <position position="11"/>
    </location>
    <ligand>
        <name>ATP</name>
        <dbReference type="ChEBI" id="CHEBI:30616"/>
    </ligand>
</feature>
<feature type="binding site" evidence="3">
    <location>
        <position position="59"/>
    </location>
    <ligand>
        <name>ATP</name>
        <dbReference type="ChEBI" id="CHEBI:30616"/>
    </ligand>
</feature>
<feature type="binding site" evidence="3">
    <location>
        <position position="87"/>
    </location>
    <ligand>
        <name>ATP</name>
        <dbReference type="ChEBI" id="CHEBI:30616"/>
    </ligand>
</feature>
<feature type="binding site" evidence="3">
    <location>
        <position position="93"/>
    </location>
    <ligand>
        <name>ATP</name>
        <dbReference type="ChEBI" id="CHEBI:30616"/>
    </ligand>
</feature>
<feature type="binding site" evidence="3">
    <location>
        <position position="104"/>
    </location>
    <ligand>
        <name>ATP</name>
        <dbReference type="ChEBI" id="CHEBI:30616"/>
    </ligand>
</feature>
<feature type="binding site" evidence="3">
    <location>
        <position position="114"/>
    </location>
    <ligand>
        <name>ATP</name>
        <dbReference type="ChEBI" id="CHEBI:30616"/>
    </ligand>
</feature>
<sequence length="152" mass="16661">MAAERSFIAIKPDGVQRGLVGEILGRFERKGFKLVGLKQLTPSRELAEQHYGVHKERPFFGGLVDFITSGPVVAMVWEGDGVITSARKMIGATKPLEAEPGTIRGDLAINIGRNVIHGSDAPETAEFEIGLWFNPSELSDWTPSDQTWRVEG</sequence>
<organism>
    <name type="scientific">Synechococcus sp. (strain CC9311)</name>
    <dbReference type="NCBI Taxonomy" id="64471"/>
    <lineage>
        <taxon>Bacteria</taxon>
        <taxon>Bacillati</taxon>
        <taxon>Cyanobacteriota</taxon>
        <taxon>Cyanophyceae</taxon>
        <taxon>Synechococcales</taxon>
        <taxon>Synechococcaceae</taxon>
        <taxon>Synechococcus</taxon>
    </lineage>
</organism>
<gene>
    <name evidence="3" type="primary">ndk</name>
    <name type="ordered locus">sync_2741</name>
</gene>
<name>NDK_SYNS3</name>
<proteinExistence type="inferred from homology"/>
<evidence type="ECO:0000250" key="1">
    <source>
        <dbReference type="UniProtKB" id="Q9KNM4"/>
    </source>
</evidence>
<evidence type="ECO:0000250" key="2">
    <source>
        <dbReference type="UniProtKB" id="Q9KTX4"/>
    </source>
</evidence>
<evidence type="ECO:0000255" key="3">
    <source>
        <dbReference type="HAMAP-Rule" id="MF_00451"/>
    </source>
</evidence>
<dbReference type="EC" id="2.7.4.6" evidence="3"/>
<dbReference type="EMBL" id="CP000435">
    <property type="protein sequence ID" value="ABI45404.1"/>
    <property type="molecule type" value="Genomic_DNA"/>
</dbReference>
<dbReference type="RefSeq" id="WP_011620633.1">
    <property type="nucleotide sequence ID" value="NC_008319.1"/>
</dbReference>
<dbReference type="SMR" id="Q0I6J3"/>
<dbReference type="STRING" id="64471.sync_2741"/>
<dbReference type="KEGG" id="syg:sync_2741"/>
<dbReference type="eggNOG" id="COG0105">
    <property type="taxonomic scope" value="Bacteria"/>
</dbReference>
<dbReference type="HOGENOM" id="CLU_060216_6_3_3"/>
<dbReference type="OrthoDB" id="9801161at2"/>
<dbReference type="Proteomes" id="UP000001961">
    <property type="component" value="Chromosome"/>
</dbReference>
<dbReference type="GO" id="GO:0005737">
    <property type="term" value="C:cytoplasm"/>
    <property type="evidence" value="ECO:0007669"/>
    <property type="project" value="UniProtKB-SubCell"/>
</dbReference>
<dbReference type="GO" id="GO:0005524">
    <property type="term" value="F:ATP binding"/>
    <property type="evidence" value="ECO:0007669"/>
    <property type="project" value="UniProtKB-UniRule"/>
</dbReference>
<dbReference type="GO" id="GO:0046872">
    <property type="term" value="F:metal ion binding"/>
    <property type="evidence" value="ECO:0007669"/>
    <property type="project" value="UniProtKB-KW"/>
</dbReference>
<dbReference type="GO" id="GO:0004550">
    <property type="term" value="F:nucleoside diphosphate kinase activity"/>
    <property type="evidence" value="ECO:0007669"/>
    <property type="project" value="UniProtKB-UniRule"/>
</dbReference>
<dbReference type="GO" id="GO:0006241">
    <property type="term" value="P:CTP biosynthetic process"/>
    <property type="evidence" value="ECO:0007669"/>
    <property type="project" value="UniProtKB-UniRule"/>
</dbReference>
<dbReference type="GO" id="GO:0006183">
    <property type="term" value="P:GTP biosynthetic process"/>
    <property type="evidence" value="ECO:0007669"/>
    <property type="project" value="UniProtKB-UniRule"/>
</dbReference>
<dbReference type="GO" id="GO:0006228">
    <property type="term" value="P:UTP biosynthetic process"/>
    <property type="evidence" value="ECO:0007669"/>
    <property type="project" value="UniProtKB-UniRule"/>
</dbReference>
<dbReference type="CDD" id="cd04413">
    <property type="entry name" value="NDPk_I"/>
    <property type="match status" value="1"/>
</dbReference>
<dbReference type="FunFam" id="3.30.70.141:FF:000002">
    <property type="entry name" value="Nucleoside diphosphate kinase"/>
    <property type="match status" value="1"/>
</dbReference>
<dbReference type="Gene3D" id="3.30.70.141">
    <property type="entry name" value="Nucleoside diphosphate kinase-like domain"/>
    <property type="match status" value="1"/>
</dbReference>
<dbReference type="HAMAP" id="MF_00451">
    <property type="entry name" value="NDP_kinase"/>
    <property type="match status" value="1"/>
</dbReference>
<dbReference type="InterPro" id="IPR034907">
    <property type="entry name" value="NDK-like_dom"/>
</dbReference>
<dbReference type="InterPro" id="IPR036850">
    <property type="entry name" value="NDK-like_dom_sf"/>
</dbReference>
<dbReference type="InterPro" id="IPR001564">
    <property type="entry name" value="Nucleoside_diP_kinase"/>
</dbReference>
<dbReference type="InterPro" id="IPR023005">
    <property type="entry name" value="Nucleoside_diP_kinase_AS"/>
</dbReference>
<dbReference type="NCBIfam" id="NF001908">
    <property type="entry name" value="PRK00668.1"/>
    <property type="match status" value="1"/>
</dbReference>
<dbReference type="PANTHER" id="PTHR11349">
    <property type="entry name" value="NUCLEOSIDE DIPHOSPHATE KINASE"/>
    <property type="match status" value="1"/>
</dbReference>
<dbReference type="Pfam" id="PF00334">
    <property type="entry name" value="NDK"/>
    <property type="match status" value="1"/>
</dbReference>
<dbReference type="PRINTS" id="PR01243">
    <property type="entry name" value="NUCDPKINASE"/>
</dbReference>
<dbReference type="SMART" id="SM00562">
    <property type="entry name" value="NDK"/>
    <property type="match status" value="1"/>
</dbReference>
<dbReference type="SUPFAM" id="SSF54919">
    <property type="entry name" value="Nucleoside diphosphate kinase, NDK"/>
    <property type="match status" value="1"/>
</dbReference>
<dbReference type="PROSITE" id="PS00469">
    <property type="entry name" value="NDPK"/>
    <property type="match status" value="1"/>
</dbReference>
<dbReference type="PROSITE" id="PS51374">
    <property type="entry name" value="NDPK_LIKE"/>
    <property type="match status" value="1"/>
</dbReference>
<keyword id="KW-0067">ATP-binding</keyword>
<keyword id="KW-0963">Cytoplasm</keyword>
<keyword id="KW-0418">Kinase</keyword>
<keyword id="KW-0460">Magnesium</keyword>
<keyword id="KW-0479">Metal-binding</keyword>
<keyword id="KW-0546">Nucleotide metabolism</keyword>
<keyword id="KW-0547">Nucleotide-binding</keyword>
<keyword id="KW-0597">Phosphoprotein</keyword>
<keyword id="KW-1185">Reference proteome</keyword>
<keyword id="KW-0808">Transferase</keyword>
<comment type="function">
    <text evidence="3">Major role in the synthesis of nucleoside triphosphates other than ATP. The ATP gamma phosphate is transferred to the NDP beta phosphate via a ping-pong mechanism, using a phosphorylated active-site intermediate.</text>
</comment>
<comment type="function">
    <text evidence="1">(Microbial infection) Catalyzes the phosphorylation of dZDP to dZTP, when the bacterium is infected by a phage that produces the substrate for the synthesis of dZTP (2- amino-2'-deoxyadenosine 5'-triphosphate), which is then used by the phage as a DNA polymerase substrate.</text>
</comment>
<comment type="catalytic activity">
    <reaction evidence="2">
        <text>dZDP + ATP = dZTP + ADP</text>
        <dbReference type="Rhea" id="RHEA:67644"/>
        <dbReference type="ChEBI" id="CHEBI:30616"/>
        <dbReference type="ChEBI" id="CHEBI:172929"/>
        <dbReference type="ChEBI" id="CHEBI:172931"/>
        <dbReference type="ChEBI" id="CHEBI:456216"/>
    </reaction>
</comment>
<comment type="catalytic activity">
    <reaction evidence="3">
        <text>a 2'-deoxyribonucleoside 5'-diphosphate + ATP = a 2'-deoxyribonucleoside 5'-triphosphate + ADP</text>
        <dbReference type="Rhea" id="RHEA:44640"/>
        <dbReference type="ChEBI" id="CHEBI:30616"/>
        <dbReference type="ChEBI" id="CHEBI:61560"/>
        <dbReference type="ChEBI" id="CHEBI:73316"/>
        <dbReference type="ChEBI" id="CHEBI:456216"/>
        <dbReference type="EC" id="2.7.4.6"/>
    </reaction>
</comment>
<comment type="catalytic activity">
    <reaction evidence="3">
        <text>a ribonucleoside 5'-diphosphate + ATP = a ribonucleoside 5'-triphosphate + ADP</text>
        <dbReference type="Rhea" id="RHEA:18113"/>
        <dbReference type="ChEBI" id="CHEBI:30616"/>
        <dbReference type="ChEBI" id="CHEBI:57930"/>
        <dbReference type="ChEBI" id="CHEBI:61557"/>
        <dbReference type="ChEBI" id="CHEBI:456216"/>
        <dbReference type="EC" id="2.7.4.6"/>
    </reaction>
</comment>
<comment type="cofactor">
    <cofactor evidence="3">
        <name>Mg(2+)</name>
        <dbReference type="ChEBI" id="CHEBI:18420"/>
    </cofactor>
</comment>
<comment type="pathway">
    <text evidence="2">Purine metabolism.</text>
</comment>
<comment type="subunit">
    <text evidence="3">Homotetramer.</text>
</comment>
<comment type="subcellular location">
    <subcellularLocation>
        <location evidence="3">Cytoplasm</location>
    </subcellularLocation>
</comment>
<comment type="similarity">
    <text evidence="3">Belongs to the NDK family.</text>
</comment>